<dbReference type="EMBL" id="CP000251">
    <property type="protein sequence ID" value="ABC80843.1"/>
    <property type="molecule type" value="Genomic_DNA"/>
</dbReference>
<dbReference type="RefSeq" id="WP_011420126.1">
    <property type="nucleotide sequence ID" value="NC_007760.1"/>
</dbReference>
<dbReference type="SMR" id="Q2IPW2"/>
<dbReference type="KEGG" id="ade:Adeh_1068"/>
<dbReference type="eggNOG" id="COG2220">
    <property type="taxonomic scope" value="Bacteria"/>
</dbReference>
<dbReference type="HOGENOM" id="CLU_070010_4_0_7"/>
<dbReference type="OrthoDB" id="9789133at2"/>
<dbReference type="Proteomes" id="UP000001935">
    <property type="component" value="Chromosome"/>
</dbReference>
<dbReference type="GO" id="GO:0016787">
    <property type="term" value="F:hydrolase activity"/>
    <property type="evidence" value="ECO:0007669"/>
    <property type="project" value="UniProtKB-UniRule"/>
</dbReference>
<dbReference type="Gene3D" id="3.60.15.10">
    <property type="entry name" value="Ribonuclease Z/Hydroxyacylglutathione hydrolase-like"/>
    <property type="match status" value="1"/>
</dbReference>
<dbReference type="HAMAP" id="MF_00457">
    <property type="entry name" value="UPF0173"/>
    <property type="match status" value="1"/>
</dbReference>
<dbReference type="InterPro" id="IPR001279">
    <property type="entry name" value="Metallo-B-lactamas"/>
</dbReference>
<dbReference type="InterPro" id="IPR036866">
    <property type="entry name" value="RibonucZ/Hydroxyglut_hydro"/>
</dbReference>
<dbReference type="InterPro" id="IPR022877">
    <property type="entry name" value="UPF0173"/>
</dbReference>
<dbReference type="InterPro" id="IPR050114">
    <property type="entry name" value="UPF0173_UPF0282_UlaG_hydrolase"/>
</dbReference>
<dbReference type="NCBIfam" id="NF001911">
    <property type="entry name" value="PRK00685.1"/>
    <property type="match status" value="1"/>
</dbReference>
<dbReference type="PANTHER" id="PTHR43546:SF3">
    <property type="entry name" value="UPF0173 METAL-DEPENDENT HYDROLASE MJ1163"/>
    <property type="match status" value="1"/>
</dbReference>
<dbReference type="PANTHER" id="PTHR43546">
    <property type="entry name" value="UPF0173 METAL-DEPENDENT HYDROLASE MJ1163-RELATED"/>
    <property type="match status" value="1"/>
</dbReference>
<dbReference type="Pfam" id="PF13483">
    <property type="entry name" value="Lactamase_B_3"/>
    <property type="match status" value="1"/>
</dbReference>
<dbReference type="SMART" id="SM00849">
    <property type="entry name" value="Lactamase_B"/>
    <property type="match status" value="1"/>
</dbReference>
<dbReference type="SUPFAM" id="SSF56281">
    <property type="entry name" value="Metallo-hydrolase/oxidoreductase"/>
    <property type="match status" value="1"/>
</dbReference>
<comment type="similarity">
    <text evidence="1">Belongs to the UPF0173 family.</text>
</comment>
<feature type="chain" id="PRO_0000367159" description="UPF0173 metal-dependent hydrolase Adeh_1068">
    <location>
        <begin position="1"/>
        <end position="274"/>
    </location>
</feature>
<name>Y1068_ANADE</name>
<evidence type="ECO:0000255" key="1">
    <source>
        <dbReference type="HAMAP-Rule" id="MF_00457"/>
    </source>
</evidence>
<reference key="1">
    <citation type="submission" date="2006-01" db="EMBL/GenBank/DDBJ databases">
        <title>Complete sequence of Anaeromyxobacter dehalogenans 2CP-C.</title>
        <authorList>
            <person name="Copeland A."/>
            <person name="Lucas S."/>
            <person name="Lapidus A."/>
            <person name="Barry K."/>
            <person name="Detter J.C."/>
            <person name="Glavina T."/>
            <person name="Hammon N."/>
            <person name="Israni S."/>
            <person name="Pitluck S."/>
            <person name="Brettin T."/>
            <person name="Bruce D."/>
            <person name="Han C."/>
            <person name="Tapia R."/>
            <person name="Gilna P."/>
            <person name="Kiss H."/>
            <person name="Schmutz J."/>
            <person name="Larimer F."/>
            <person name="Land M."/>
            <person name="Kyrpides N."/>
            <person name="Anderson I."/>
            <person name="Sanford R.A."/>
            <person name="Ritalahti K.M."/>
            <person name="Thomas H.S."/>
            <person name="Kirby J.R."/>
            <person name="Zhulin I.B."/>
            <person name="Loeffler F.E."/>
            <person name="Richardson P."/>
        </authorList>
    </citation>
    <scope>NUCLEOTIDE SEQUENCE [LARGE SCALE GENOMIC DNA]</scope>
    <source>
        <strain>2CP-C</strain>
    </source>
</reference>
<organism>
    <name type="scientific">Anaeromyxobacter dehalogenans (strain 2CP-C)</name>
    <dbReference type="NCBI Taxonomy" id="290397"/>
    <lineage>
        <taxon>Bacteria</taxon>
        <taxon>Pseudomonadati</taxon>
        <taxon>Myxococcota</taxon>
        <taxon>Myxococcia</taxon>
        <taxon>Myxococcales</taxon>
        <taxon>Cystobacterineae</taxon>
        <taxon>Anaeromyxobacteraceae</taxon>
        <taxon>Anaeromyxobacter</taxon>
    </lineage>
</organism>
<accession>Q2IPW2</accession>
<protein>
    <recommendedName>
        <fullName evidence="1">UPF0173 metal-dependent hydrolase Adeh_1068</fullName>
    </recommendedName>
</protein>
<gene>
    <name type="ordered locus">Adeh_1068</name>
</gene>
<proteinExistence type="inferred from homology"/>
<sequence length="274" mass="28226">MSSASRSLARLAALALAALAAAPLAASAQPKAARGKTEVTWYGHAAFVVTTPGGTVLAIDPWLSNPKAPEPGLAGKLPKVDYILVSHGHFDHVGDAIAIAKRTGAKLITNFDLGSSLVAAGYPKDQAGMDTLGNMGGTIQAGDAAVTMVTAVHSSGFTDEKGTGHPGGNPMGFVIQVKGGPTIYHTGDTDLTQDMKQLPERFGRVDVMLTCIGGHFTMDPKAAAIAVGYVHPRTVVPMHFGTFPAIAGTPDELRAALKGKAEVRVLEPGKPVGF</sequence>
<keyword id="KW-0378">Hydrolase</keyword>
<keyword id="KW-1185">Reference proteome</keyword>